<evidence type="ECO:0000255" key="1">
    <source>
        <dbReference type="HAMAP-Rule" id="MF_00170"/>
    </source>
</evidence>
<sequence length="236" mass="24470">MKTTGGSEEQKRRAGEKAVEYVNDGDIVGLGTGSTAAAAIDALGDAVAAGYDIHGVPTSFATRDRAIEAGIPLTRIEAVDHIDVAIDGSDEINNNLTLIKGGGAAHAREKVIDATADQFIVVADESKLVETLSEPVPVSTLPMAQKPVKHRLDSLGATTTLRSATMKDGPVITDNGNIVFDCAFGHIENAEALAKSLAEIPGTVAHGLFVNLADVACIGTENGTNVYHGDQDQGQN</sequence>
<proteinExistence type="inferred from homology"/>
<organism>
    <name type="scientific">Haloquadratum walsbyi (strain DSM 16790 / HBSQ001)</name>
    <dbReference type="NCBI Taxonomy" id="362976"/>
    <lineage>
        <taxon>Archaea</taxon>
        <taxon>Methanobacteriati</taxon>
        <taxon>Methanobacteriota</taxon>
        <taxon>Stenosarchaea group</taxon>
        <taxon>Halobacteria</taxon>
        <taxon>Halobacteriales</taxon>
        <taxon>Haloferacaceae</taxon>
        <taxon>Haloquadratum</taxon>
    </lineage>
</organism>
<gene>
    <name evidence="1" type="primary">rpiA</name>
    <name type="ordered locus">HQ_3679A</name>
</gene>
<comment type="function">
    <text evidence="1">Catalyzes the reversible conversion of ribose-5-phosphate to ribulose 5-phosphate.</text>
</comment>
<comment type="catalytic activity">
    <reaction evidence="1">
        <text>aldehydo-D-ribose 5-phosphate = D-ribulose 5-phosphate</text>
        <dbReference type="Rhea" id="RHEA:14657"/>
        <dbReference type="ChEBI" id="CHEBI:58121"/>
        <dbReference type="ChEBI" id="CHEBI:58273"/>
        <dbReference type="EC" id="5.3.1.6"/>
    </reaction>
</comment>
<comment type="pathway">
    <text evidence="1">Carbohydrate degradation; pentose phosphate pathway; D-ribose 5-phosphate from D-ribulose 5-phosphate (non-oxidative stage): step 1/1.</text>
</comment>
<comment type="subunit">
    <text evidence="1">Homodimer.</text>
</comment>
<comment type="similarity">
    <text evidence="1">Belongs to the ribose 5-phosphate isomerase family.</text>
</comment>
<name>RPIA_HALWD</name>
<protein>
    <recommendedName>
        <fullName evidence="1">Ribose-5-phosphate isomerase A</fullName>
        <ecNumber evidence="1">5.3.1.6</ecNumber>
    </recommendedName>
    <alternativeName>
        <fullName evidence="1">Phosphoriboisomerase A</fullName>
        <shortName evidence="1">PRI</shortName>
    </alternativeName>
</protein>
<dbReference type="EC" id="5.3.1.6" evidence="1"/>
<dbReference type="EMBL" id="AM180088">
    <property type="protein sequence ID" value="CAJ53766.1"/>
    <property type="molecule type" value="Genomic_DNA"/>
</dbReference>
<dbReference type="RefSeq" id="WP_011572848.1">
    <property type="nucleotide sequence ID" value="NC_008212.1"/>
</dbReference>
<dbReference type="SMR" id="Q18E67"/>
<dbReference type="STRING" id="362976.HQ_3679A"/>
<dbReference type="GeneID" id="4194597"/>
<dbReference type="KEGG" id="hwa:HQ_3679A"/>
<dbReference type="eggNOG" id="arCOG01122">
    <property type="taxonomic scope" value="Archaea"/>
</dbReference>
<dbReference type="HOGENOM" id="CLU_056590_1_1_2"/>
<dbReference type="UniPathway" id="UPA00115">
    <property type="reaction ID" value="UER00412"/>
</dbReference>
<dbReference type="Proteomes" id="UP000001975">
    <property type="component" value="Chromosome"/>
</dbReference>
<dbReference type="GO" id="GO:0005829">
    <property type="term" value="C:cytosol"/>
    <property type="evidence" value="ECO:0007669"/>
    <property type="project" value="TreeGrafter"/>
</dbReference>
<dbReference type="GO" id="GO:0004751">
    <property type="term" value="F:ribose-5-phosphate isomerase activity"/>
    <property type="evidence" value="ECO:0007669"/>
    <property type="project" value="UniProtKB-UniRule"/>
</dbReference>
<dbReference type="GO" id="GO:0006014">
    <property type="term" value="P:D-ribose metabolic process"/>
    <property type="evidence" value="ECO:0007669"/>
    <property type="project" value="TreeGrafter"/>
</dbReference>
<dbReference type="GO" id="GO:0009052">
    <property type="term" value="P:pentose-phosphate shunt, non-oxidative branch"/>
    <property type="evidence" value="ECO:0007669"/>
    <property type="project" value="UniProtKB-UniRule"/>
</dbReference>
<dbReference type="CDD" id="cd01398">
    <property type="entry name" value="RPI_A"/>
    <property type="match status" value="1"/>
</dbReference>
<dbReference type="FunFam" id="3.30.70.260:FF:000018">
    <property type="entry name" value="Ribose-5-phosphate isomerase A"/>
    <property type="match status" value="1"/>
</dbReference>
<dbReference type="FunFam" id="3.40.50.1360:FF:000001">
    <property type="entry name" value="Ribose-5-phosphate isomerase A"/>
    <property type="match status" value="1"/>
</dbReference>
<dbReference type="Gene3D" id="3.30.70.260">
    <property type="match status" value="1"/>
</dbReference>
<dbReference type="Gene3D" id="3.40.50.1360">
    <property type="match status" value="1"/>
</dbReference>
<dbReference type="HAMAP" id="MF_00170">
    <property type="entry name" value="Rib_5P_isom_A"/>
    <property type="match status" value="1"/>
</dbReference>
<dbReference type="InterPro" id="IPR037171">
    <property type="entry name" value="NagB/RpiA_transferase-like"/>
</dbReference>
<dbReference type="InterPro" id="IPR020672">
    <property type="entry name" value="Ribose5P_isomerase_typA_subgr"/>
</dbReference>
<dbReference type="InterPro" id="IPR004788">
    <property type="entry name" value="Ribose5P_isomerase_type_A"/>
</dbReference>
<dbReference type="NCBIfam" id="NF001924">
    <property type="entry name" value="PRK00702.1"/>
    <property type="match status" value="1"/>
</dbReference>
<dbReference type="NCBIfam" id="TIGR00021">
    <property type="entry name" value="rpiA"/>
    <property type="match status" value="1"/>
</dbReference>
<dbReference type="PANTHER" id="PTHR11934">
    <property type="entry name" value="RIBOSE-5-PHOSPHATE ISOMERASE"/>
    <property type="match status" value="1"/>
</dbReference>
<dbReference type="PANTHER" id="PTHR11934:SF0">
    <property type="entry name" value="RIBOSE-5-PHOSPHATE ISOMERASE"/>
    <property type="match status" value="1"/>
</dbReference>
<dbReference type="Pfam" id="PF06026">
    <property type="entry name" value="Rib_5-P_isom_A"/>
    <property type="match status" value="1"/>
</dbReference>
<dbReference type="SUPFAM" id="SSF75445">
    <property type="entry name" value="D-ribose-5-phosphate isomerase (RpiA), lid domain"/>
    <property type="match status" value="1"/>
</dbReference>
<dbReference type="SUPFAM" id="SSF100950">
    <property type="entry name" value="NagB/RpiA/CoA transferase-like"/>
    <property type="match status" value="1"/>
</dbReference>
<reference key="1">
    <citation type="journal article" date="2006" name="BMC Genomics">
        <title>The genome of the square archaeon Haloquadratum walsbyi: life at the limits of water activity.</title>
        <authorList>
            <person name="Bolhuis H."/>
            <person name="Palm P."/>
            <person name="Wende A."/>
            <person name="Falb M."/>
            <person name="Rampp M."/>
            <person name="Rodriguez-Valera F."/>
            <person name="Pfeiffer F."/>
            <person name="Oesterhelt D."/>
        </authorList>
    </citation>
    <scope>NUCLEOTIDE SEQUENCE [LARGE SCALE GENOMIC DNA]</scope>
    <source>
        <strain>DSM 16790 / HBSQ001</strain>
    </source>
</reference>
<keyword id="KW-0413">Isomerase</keyword>
<keyword id="KW-1185">Reference proteome</keyword>
<accession>Q18E67</accession>
<feature type="chain" id="PRO_1000016932" description="Ribose-5-phosphate isomerase A">
    <location>
        <begin position="1"/>
        <end position="236"/>
    </location>
</feature>
<feature type="active site" description="Proton acceptor" evidence="1">
    <location>
        <position position="109"/>
    </location>
</feature>
<feature type="binding site" evidence="1">
    <location>
        <begin position="32"/>
        <end position="35"/>
    </location>
    <ligand>
        <name>substrate</name>
    </ligand>
</feature>
<feature type="binding site" evidence="1">
    <location>
        <begin position="87"/>
        <end position="90"/>
    </location>
    <ligand>
        <name>substrate</name>
    </ligand>
</feature>
<feature type="binding site" evidence="1">
    <location>
        <begin position="100"/>
        <end position="103"/>
    </location>
    <ligand>
        <name>substrate</name>
    </ligand>
</feature>
<feature type="binding site" evidence="1">
    <location>
        <position position="127"/>
    </location>
    <ligand>
        <name>substrate</name>
    </ligand>
</feature>